<protein>
    <recommendedName>
        <fullName evidence="1">ATP synthase subunit alpha</fullName>
        <ecNumber evidence="1">7.1.2.2</ecNumber>
    </recommendedName>
    <alternativeName>
        <fullName evidence="1">ATP synthase F1 sector subunit alpha</fullName>
    </alternativeName>
    <alternativeName>
        <fullName evidence="1">F-ATPase subunit alpha</fullName>
    </alternativeName>
</protein>
<evidence type="ECO:0000255" key="1">
    <source>
        <dbReference type="HAMAP-Rule" id="MF_01346"/>
    </source>
</evidence>
<organism>
    <name type="scientific">Methylobacterium sp. (strain 4-46)</name>
    <dbReference type="NCBI Taxonomy" id="426117"/>
    <lineage>
        <taxon>Bacteria</taxon>
        <taxon>Pseudomonadati</taxon>
        <taxon>Pseudomonadota</taxon>
        <taxon>Alphaproteobacteria</taxon>
        <taxon>Hyphomicrobiales</taxon>
        <taxon>Methylobacteriaceae</taxon>
        <taxon>Methylobacterium</taxon>
    </lineage>
</organism>
<sequence>MDIRAAEISAILKEQIKNFGQEAEVTEVGQVLSVGDGIARVYGLDNVQAGEMVEFESGVRGMALNLEQDNVGVVIFGVDRDIKEGQTVKRTGAIVDVPVGKGLLGRVVDALGNPIDGKGPIVSTERRRVDVKAPGIIPRKSVHEPMATGLKSVDALIPIGRGQRELIIGDRQTGKTAIALDTILNQKPAHEGTDEKAKLYCVYVAVGQKRSTVAQFVKVLEDNGALDYSIVIAATASDPAPMQFLAPFSGCAMGEFFRDNGMHAVIIYDDLSKQAVAYRQMSLLLRRPPGREAYPGDVFYLHSRLLERAAKMGDAAGAGSLTALPVIETQANDVSAYIPTNVISITDGQIFLETDLFYQGVRPAVNVGLSVSRVGSAAQTKAMKKVAGKIKGELAQYREMAAFAQFGSDLDAATQRLLNRGSRLTELLKQPQFSPLKMEEQVAVIYAGVNGYLDAIPVNRVRAFEDGLLSTLRGRHADLLETIRTSKDLGDDAAAKLKGVVESFAKSFS</sequence>
<comment type="function">
    <text evidence="1">Produces ATP from ADP in the presence of a proton gradient across the membrane. The alpha chain is a regulatory subunit.</text>
</comment>
<comment type="catalytic activity">
    <reaction evidence="1">
        <text>ATP + H2O + 4 H(+)(in) = ADP + phosphate + 5 H(+)(out)</text>
        <dbReference type="Rhea" id="RHEA:57720"/>
        <dbReference type="ChEBI" id="CHEBI:15377"/>
        <dbReference type="ChEBI" id="CHEBI:15378"/>
        <dbReference type="ChEBI" id="CHEBI:30616"/>
        <dbReference type="ChEBI" id="CHEBI:43474"/>
        <dbReference type="ChEBI" id="CHEBI:456216"/>
        <dbReference type="EC" id="7.1.2.2"/>
    </reaction>
</comment>
<comment type="subunit">
    <text evidence="1">F-type ATPases have 2 components, CF(1) - the catalytic core - and CF(0) - the membrane proton channel. CF(1) has five subunits: alpha(3), beta(3), gamma(1), delta(1), epsilon(1). CF(0) has three main subunits: a(1), b(2) and c(9-12). The alpha and beta chains form an alternating ring which encloses part of the gamma chain. CF(1) is attached to CF(0) by a central stalk formed by the gamma and epsilon chains, while a peripheral stalk is formed by the delta and b chains.</text>
</comment>
<comment type="subcellular location">
    <subcellularLocation>
        <location evidence="1">Cell inner membrane</location>
        <topology evidence="1">Peripheral membrane protein</topology>
    </subcellularLocation>
</comment>
<comment type="similarity">
    <text evidence="1">Belongs to the ATPase alpha/beta chains family.</text>
</comment>
<reference key="1">
    <citation type="submission" date="2008-02" db="EMBL/GenBank/DDBJ databases">
        <title>Complete sequence of chromosome of Methylobacterium sp. 4-46.</title>
        <authorList>
            <consortium name="US DOE Joint Genome Institute"/>
            <person name="Copeland A."/>
            <person name="Lucas S."/>
            <person name="Lapidus A."/>
            <person name="Glavina del Rio T."/>
            <person name="Dalin E."/>
            <person name="Tice H."/>
            <person name="Bruce D."/>
            <person name="Goodwin L."/>
            <person name="Pitluck S."/>
            <person name="Chertkov O."/>
            <person name="Brettin T."/>
            <person name="Detter J.C."/>
            <person name="Han C."/>
            <person name="Kuske C.R."/>
            <person name="Schmutz J."/>
            <person name="Larimer F."/>
            <person name="Land M."/>
            <person name="Hauser L."/>
            <person name="Kyrpides N."/>
            <person name="Ivanova N."/>
            <person name="Marx C.J."/>
            <person name="Richardson P."/>
        </authorList>
    </citation>
    <scope>NUCLEOTIDE SEQUENCE [LARGE SCALE GENOMIC DNA]</scope>
    <source>
        <strain>4-46</strain>
    </source>
</reference>
<accession>B0UE41</accession>
<gene>
    <name evidence="1" type="primary">atpA</name>
    <name type="ordered locus">M446_6637</name>
</gene>
<name>ATPA_METS4</name>
<feature type="chain" id="PRO_1000143408" description="ATP synthase subunit alpha">
    <location>
        <begin position="1"/>
        <end position="509"/>
    </location>
</feature>
<feature type="binding site" evidence="1">
    <location>
        <begin position="169"/>
        <end position="176"/>
    </location>
    <ligand>
        <name>ATP</name>
        <dbReference type="ChEBI" id="CHEBI:30616"/>
    </ligand>
</feature>
<feature type="site" description="Required for activity" evidence="1">
    <location>
        <position position="370"/>
    </location>
</feature>
<keyword id="KW-0066">ATP synthesis</keyword>
<keyword id="KW-0067">ATP-binding</keyword>
<keyword id="KW-0997">Cell inner membrane</keyword>
<keyword id="KW-1003">Cell membrane</keyword>
<keyword id="KW-0139">CF(1)</keyword>
<keyword id="KW-0375">Hydrogen ion transport</keyword>
<keyword id="KW-0406">Ion transport</keyword>
<keyword id="KW-0472">Membrane</keyword>
<keyword id="KW-0547">Nucleotide-binding</keyword>
<keyword id="KW-1278">Translocase</keyword>
<keyword id="KW-0813">Transport</keyword>
<dbReference type="EC" id="7.1.2.2" evidence="1"/>
<dbReference type="EMBL" id="CP000943">
    <property type="protein sequence ID" value="ACA20891.1"/>
    <property type="molecule type" value="Genomic_DNA"/>
</dbReference>
<dbReference type="RefSeq" id="WP_012336267.1">
    <property type="nucleotide sequence ID" value="NC_010511.1"/>
</dbReference>
<dbReference type="SMR" id="B0UE41"/>
<dbReference type="STRING" id="426117.M446_6637"/>
<dbReference type="KEGG" id="met:M446_6637"/>
<dbReference type="eggNOG" id="COG0056">
    <property type="taxonomic scope" value="Bacteria"/>
</dbReference>
<dbReference type="HOGENOM" id="CLU_010091_2_1_5"/>
<dbReference type="GO" id="GO:0005886">
    <property type="term" value="C:plasma membrane"/>
    <property type="evidence" value="ECO:0007669"/>
    <property type="project" value="UniProtKB-SubCell"/>
</dbReference>
<dbReference type="GO" id="GO:0045259">
    <property type="term" value="C:proton-transporting ATP synthase complex"/>
    <property type="evidence" value="ECO:0007669"/>
    <property type="project" value="UniProtKB-KW"/>
</dbReference>
<dbReference type="GO" id="GO:0043531">
    <property type="term" value="F:ADP binding"/>
    <property type="evidence" value="ECO:0007669"/>
    <property type="project" value="TreeGrafter"/>
</dbReference>
<dbReference type="GO" id="GO:0005524">
    <property type="term" value="F:ATP binding"/>
    <property type="evidence" value="ECO:0007669"/>
    <property type="project" value="UniProtKB-UniRule"/>
</dbReference>
<dbReference type="GO" id="GO:0046933">
    <property type="term" value="F:proton-transporting ATP synthase activity, rotational mechanism"/>
    <property type="evidence" value="ECO:0007669"/>
    <property type="project" value="UniProtKB-UniRule"/>
</dbReference>
<dbReference type="CDD" id="cd18113">
    <property type="entry name" value="ATP-synt_F1_alpha_C"/>
    <property type="match status" value="1"/>
</dbReference>
<dbReference type="CDD" id="cd18116">
    <property type="entry name" value="ATP-synt_F1_alpha_N"/>
    <property type="match status" value="1"/>
</dbReference>
<dbReference type="CDD" id="cd01132">
    <property type="entry name" value="F1-ATPase_alpha_CD"/>
    <property type="match status" value="1"/>
</dbReference>
<dbReference type="FunFam" id="1.20.150.20:FF:000001">
    <property type="entry name" value="ATP synthase subunit alpha"/>
    <property type="match status" value="1"/>
</dbReference>
<dbReference type="FunFam" id="2.40.30.20:FF:000001">
    <property type="entry name" value="ATP synthase subunit alpha"/>
    <property type="match status" value="1"/>
</dbReference>
<dbReference type="FunFam" id="3.40.50.300:FF:002432">
    <property type="entry name" value="ATP synthase subunit alpha, mitochondrial"/>
    <property type="match status" value="1"/>
</dbReference>
<dbReference type="Gene3D" id="2.40.30.20">
    <property type="match status" value="1"/>
</dbReference>
<dbReference type="Gene3D" id="1.20.150.20">
    <property type="entry name" value="ATP synthase alpha/beta chain, C-terminal domain"/>
    <property type="match status" value="1"/>
</dbReference>
<dbReference type="Gene3D" id="3.40.50.300">
    <property type="entry name" value="P-loop containing nucleotide triphosphate hydrolases"/>
    <property type="match status" value="1"/>
</dbReference>
<dbReference type="HAMAP" id="MF_01346">
    <property type="entry name" value="ATP_synth_alpha_bact"/>
    <property type="match status" value="1"/>
</dbReference>
<dbReference type="InterPro" id="IPR023366">
    <property type="entry name" value="ATP_synth_asu-like_sf"/>
</dbReference>
<dbReference type="InterPro" id="IPR000793">
    <property type="entry name" value="ATP_synth_asu_C"/>
</dbReference>
<dbReference type="InterPro" id="IPR038376">
    <property type="entry name" value="ATP_synth_asu_C_sf"/>
</dbReference>
<dbReference type="InterPro" id="IPR033732">
    <property type="entry name" value="ATP_synth_F1_a_nt-bd_dom"/>
</dbReference>
<dbReference type="InterPro" id="IPR005294">
    <property type="entry name" value="ATP_synth_F1_asu"/>
</dbReference>
<dbReference type="InterPro" id="IPR020003">
    <property type="entry name" value="ATPase_a/bsu_AS"/>
</dbReference>
<dbReference type="InterPro" id="IPR004100">
    <property type="entry name" value="ATPase_F1/V1/A1_a/bsu_N"/>
</dbReference>
<dbReference type="InterPro" id="IPR036121">
    <property type="entry name" value="ATPase_F1/V1/A1_a/bsu_N_sf"/>
</dbReference>
<dbReference type="InterPro" id="IPR000194">
    <property type="entry name" value="ATPase_F1/V1/A1_a/bsu_nucl-bd"/>
</dbReference>
<dbReference type="InterPro" id="IPR027417">
    <property type="entry name" value="P-loop_NTPase"/>
</dbReference>
<dbReference type="NCBIfam" id="TIGR00962">
    <property type="entry name" value="atpA"/>
    <property type="match status" value="1"/>
</dbReference>
<dbReference type="NCBIfam" id="NF009884">
    <property type="entry name" value="PRK13343.1"/>
    <property type="match status" value="1"/>
</dbReference>
<dbReference type="PANTHER" id="PTHR48082">
    <property type="entry name" value="ATP SYNTHASE SUBUNIT ALPHA, MITOCHONDRIAL"/>
    <property type="match status" value="1"/>
</dbReference>
<dbReference type="PANTHER" id="PTHR48082:SF2">
    <property type="entry name" value="ATP SYNTHASE SUBUNIT ALPHA, MITOCHONDRIAL"/>
    <property type="match status" value="1"/>
</dbReference>
<dbReference type="Pfam" id="PF00006">
    <property type="entry name" value="ATP-synt_ab"/>
    <property type="match status" value="1"/>
</dbReference>
<dbReference type="Pfam" id="PF00306">
    <property type="entry name" value="ATP-synt_ab_C"/>
    <property type="match status" value="1"/>
</dbReference>
<dbReference type="Pfam" id="PF02874">
    <property type="entry name" value="ATP-synt_ab_N"/>
    <property type="match status" value="1"/>
</dbReference>
<dbReference type="PIRSF" id="PIRSF039088">
    <property type="entry name" value="F_ATPase_subunit_alpha"/>
    <property type="match status" value="1"/>
</dbReference>
<dbReference type="SUPFAM" id="SSF47917">
    <property type="entry name" value="C-terminal domain of alpha and beta subunits of F1 ATP synthase"/>
    <property type="match status" value="1"/>
</dbReference>
<dbReference type="SUPFAM" id="SSF50615">
    <property type="entry name" value="N-terminal domain of alpha and beta subunits of F1 ATP synthase"/>
    <property type="match status" value="1"/>
</dbReference>
<dbReference type="SUPFAM" id="SSF52540">
    <property type="entry name" value="P-loop containing nucleoside triphosphate hydrolases"/>
    <property type="match status" value="1"/>
</dbReference>
<dbReference type="PROSITE" id="PS00152">
    <property type="entry name" value="ATPASE_ALPHA_BETA"/>
    <property type="match status" value="1"/>
</dbReference>
<proteinExistence type="inferred from homology"/>